<protein>
    <recommendedName>
        <fullName>MATH domain and coiled-coil domain-containing protein At3g44790</fullName>
    </recommendedName>
    <alternativeName>
        <fullName>RTM3-like protein At3g44790</fullName>
    </alternativeName>
</protein>
<accession>F4J4A0</accession>
<accession>O22234</accession>
<dbReference type="EMBL" id="AC002534">
    <property type="protein sequence ID" value="AAB70028.1"/>
    <property type="status" value="ALT_SEQ"/>
    <property type="molecule type" value="Genomic_DNA"/>
</dbReference>
<dbReference type="EMBL" id="CP002686">
    <property type="protein sequence ID" value="AEE77954.1"/>
    <property type="molecule type" value="Genomic_DNA"/>
</dbReference>
<dbReference type="RefSeq" id="NP_190065.1">
    <property type="nucleotide sequence ID" value="NM_114348.2"/>
</dbReference>
<dbReference type="SMR" id="F4J4A0"/>
<dbReference type="FunCoup" id="F4J4A0">
    <property type="interactions" value="45"/>
</dbReference>
<dbReference type="STRING" id="3702.F4J4A0"/>
<dbReference type="PaxDb" id="3702-AT3G44790.1"/>
<dbReference type="ProteomicsDB" id="238879"/>
<dbReference type="EnsemblPlants" id="AT3G44790.1">
    <property type="protein sequence ID" value="AT3G44790.1"/>
    <property type="gene ID" value="AT3G44790"/>
</dbReference>
<dbReference type="GeneID" id="823610"/>
<dbReference type="Gramene" id="AT3G44790.1">
    <property type="protein sequence ID" value="AT3G44790.1"/>
    <property type="gene ID" value="AT3G44790"/>
</dbReference>
<dbReference type="KEGG" id="ath:AT3G44790"/>
<dbReference type="Araport" id="AT3G44790"/>
<dbReference type="TAIR" id="AT3G44790"/>
<dbReference type="eggNOG" id="KOG1987">
    <property type="taxonomic scope" value="Eukaryota"/>
</dbReference>
<dbReference type="HOGENOM" id="CLU_026537_0_0_1"/>
<dbReference type="InParanoid" id="F4J4A0"/>
<dbReference type="OMA" id="QRETETW"/>
<dbReference type="PRO" id="PR:F4J4A0"/>
<dbReference type="Proteomes" id="UP000006548">
    <property type="component" value="Chromosome 3"/>
</dbReference>
<dbReference type="ExpressionAtlas" id="F4J4A0">
    <property type="expression patterns" value="baseline and differential"/>
</dbReference>
<dbReference type="CDD" id="cd00121">
    <property type="entry name" value="MATH"/>
    <property type="match status" value="1"/>
</dbReference>
<dbReference type="Gene3D" id="2.60.210.10">
    <property type="entry name" value="Apoptosis, Tumor Necrosis Factor Receptor Associated Protein 2, Chain A"/>
    <property type="match status" value="1"/>
</dbReference>
<dbReference type="InterPro" id="IPR050804">
    <property type="entry name" value="MATH-CC_domain_protein"/>
</dbReference>
<dbReference type="InterPro" id="IPR002083">
    <property type="entry name" value="MATH/TRAF_dom"/>
</dbReference>
<dbReference type="InterPro" id="IPR008974">
    <property type="entry name" value="TRAF-like"/>
</dbReference>
<dbReference type="PANTHER" id="PTHR46236">
    <property type="entry name" value="TRAF-LIKE SUPERFAMILY PROTEIN"/>
    <property type="match status" value="1"/>
</dbReference>
<dbReference type="PANTHER" id="PTHR46236:SF11">
    <property type="entry name" value="TRAF-LIKE SUPERFAMILY PROTEIN"/>
    <property type="match status" value="1"/>
</dbReference>
<dbReference type="Pfam" id="PF22486">
    <property type="entry name" value="MATH_2"/>
    <property type="match status" value="1"/>
</dbReference>
<dbReference type="SMART" id="SM00061">
    <property type="entry name" value="MATH"/>
    <property type="match status" value="1"/>
</dbReference>
<dbReference type="SUPFAM" id="SSF49599">
    <property type="entry name" value="TRAF domain-like"/>
    <property type="match status" value="1"/>
</dbReference>
<dbReference type="PROSITE" id="PS50144">
    <property type="entry name" value="MATH"/>
    <property type="match status" value="1"/>
</dbReference>
<reference key="1">
    <citation type="journal article" date="2000" name="Nature">
        <title>Sequence and analysis of chromosome 3 of the plant Arabidopsis thaliana.</title>
        <authorList>
            <person name="Salanoubat M."/>
            <person name="Lemcke K."/>
            <person name="Rieger M."/>
            <person name="Ansorge W."/>
            <person name="Unseld M."/>
            <person name="Fartmann B."/>
            <person name="Valle G."/>
            <person name="Bloecker H."/>
            <person name="Perez-Alonso M."/>
            <person name="Obermaier B."/>
            <person name="Delseny M."/>
            <person name="Boutry M."/>
            <person name="Grivell L.A."/>
            <person name="Mache R."/>
            <person name="Puigdomenech P."/>
            <person name="De Simone V."/>
            <person name="Choisne N."/>
            <person name="Artiguenave F."/>
            <person name="Robert C."/>
            <person name="Brottier P."/>
            <person name="Wincker P."/>
            <person name="Cattolico L."/>
            <person name="Weissenbach J."/>
            <person name="Saurin W."/>
            <person name="Quetier F."/>
            <person name="Schaefer M."/>
            <person name="Mueller-Auer S."/>
            <person name="Gabel C."/>
            <person name="Fuchs M."/>
            <person name="Benes V."/>
            <person name="Wurmbach E."/>
            <person name="Drzonek H."/>
            <person name="Erfle H."/>
            <person name="Jordan N."/>
            <person name="Bangert S."/>
            <person name="Wiedelmann R."/>
            <person name="Kranz H."/>
            <person name="Voss H."/>
            <person name="Holland R."/>
            <person name="Brandt P."/>
            <person name="Nyakatura G."/>
            <person name="Vezzi A."/>
            <person name="D'Angelo M."/>
            <person name="Pallavicini A."/>
            <person name="Toppo S."/>
            <person name="Simionati B."/>
            <person name="Conrad A."/>
            <person name="Hornischer K."/>
            <person name="Kauer G."/>
            <person name="Loehnert T.-H."/>
            <person name="Nordsiek G."/>
            <person name="Reichelt J."/>
            <person name="Scharfe M."/>
            <person name="Schoen O."/>
            <person name="Bargues M."/>
            <person name="Terol J."/>
            <person name="Climent J."/>
            <person name="Navarro P."/>
            <person name="Collado C."/>
            <person name="Perez-Perez A."/>
            <person name="Ottenwaelder B."/>
            <person name="Duchemin D."/>
            <person name="Cooke R."/>
            <person name="Laudie M."/>
            <person name="Berger-Llauro C."/>
            <person name="Purnelle B."/>
            <person name="Masuy D."/>
            <person name="de Haan M."/>
            <person name="Maarse A.C."/>
            <person name="Alcaraz J.-P."/>
            <person name="Cottet A."/>
            <person name="Casacuberta E."/>
            <person name="Monfort A."/>
            <person name="Argiriou A."/>
            <person name="Flores M."/>
            <person name="Liguori R."/>
            <person name="Vitale D."/>
            <person name="Mannhaupt G."/>
            <person name="Haase D."/>
            <person name="Schoof H."/>
            <person name="Rudd S."/>
            <person name="Zaccaria P."/>
            <person name="Mewes H.-W."/>
            <person name="Mayer K.F.X."/>
            <person name="Kaul S."/>
            <person name="Town C.D."/>
            <person name="Koo H.L."/>
            <person name="Tallon L.J."/>
            <person name="Jenkins J."/>
            <person name="Rooney T."/>
            <person name="Rizzo M."/>
            <person name="Walts A."/>
            <person name="Utterback T."/>
            <person name="Fujii C.Y."/>
            <person name="Shea T.P."/>
            <person name="Creasy T.H."/>
            <person name="Haas B."/>
            <person name="Maiti R."/>
            <person name="Wu D."/>
            <person name="Peterson J."/>
            <person name="Van Aken S."/>
            <person name="Pai G."/>
            <person name="Militscher J."/>
            <person name="Sellers P."/>
            <person name="Gill J.E."/>
            <person name="Feldblyum T.V."/>
            <person name="Preuss D."/>
            <person name="Lin X."/>
            <person name="Nierman W.C."/>
            <person name="Salzberg S.L."/>
            <person name="White O."/>
            <person name="Venter J.C."/>
            <person name="Fraser C.M."/>
            <person name="Kaneko T."/>
            <person name="Nakamura Y."/>
            <person name="Sato S."/>
            <person name="Kato T."/>
            <person name="Asamizu E."/>
            <person name="Sasamoto S."/>
            <person name="Kimura T."/>
            <person name="Idesawa K."/>
            <person name="Kawashima K."/>
            <person name="Kishida Y."/>
            <person name="Kiyokawa C."/>
            <person name="Kohara M."/>
            <person name="Matsumoto M."/>
            <person name="Matsuno A."/>
            <person name="Muraki A."/>
            <person name="Nakayama S."/>
            <person name="Nakazaki N."/>
            <person name="Shinpo S."/>
            <person name="Takeuchi C."/>
            <person name="Wada T."/>
            <person name="Watanabe A."/>
            <person name="Yamada M."/>
            <person name="Yasuda M."/>
            <person name="Tabata S."/>
        </authorList>
    </citation>
    <scope>NUCLEOTIDE SEQUENCE [LARGE SCALE GENOMIC DNA]</scope>
    <source>
        <strain>cv. Columbia</strain>
    </source>
</reference>
<reference key="2">
    <citation type="journal article" date="2017" name="Plant J.">
        <title>Araport11: a complete reannotation of the Arabidopsis thaliana reference genome.</title>
        <authorList>
            <person name="Cheng C.Y."/>
            <person name="Krishnakumar V."/>
            <person name="Chan A.P."/>
            <person name="Thibaud-Nissen F."/>
            <person name="Schobel S."/>
            <person name="Town C.D."/>
        </authorList>
    </citation>
    <scope>GENOME REANNOTATION</scope>
    <source>
        <strain>cv. Columbia</strain>
    </source>
</reference>
<reference key="3">
    <citation type="journal article" date="2010" name="Plant Physiol.">
        <title>RTM3, which controls long-distance movement of potyviruses, is a member of a new plant gene family encoding a meprin and TRAF homology domain-containing protein.</title>
        <authorList>
            <person name="Cosson P."/>
            <person name="Sofer L."/>
            <person name="Le Q.H."/>
            <person name="Leger V."/>
            <person name="Schurdi-Levraud V."/>
            <person name="Whitham S.A."/>
            <person name="Yamamoto M.L."/>
            <person name="Gopalan S."/>
            <person name="Le Gall O."/>
            <person name="Candresse T."/>
            <person name="Carrington J.C."/>
            <person name="Revers F."/>
        </authorList>
    </citation>
    <scope>GENE FAMILY</scope>
</reference>
<keyword id="KW-0175">Coiled coil</keyword>
<keyword id="KW-1185">Reference proteome</keyword>
<organism>
    <name type="scientific">Arabidopsis thaliana</name>
    <name type="common">Mouse-ear cress</name>
    <dbReference type="NCBI Taxonomy" id="3702"/>
    <lineage>
        <taxon>Eukaryota</taxon>
        <taxon>Viridiplantae</taxon>
        <taxon>Streptophyta</taxon>
        <taxon>Embryophyta</taxon>
        <taxon>Tracheophyta</taxon>
        <taxon>Spermatophyta</taxon>
        <taxon>Magnoliopsida</taxon>
        <taxon>eudicotyledons</taxon>
        <taxon>Gunneridae</taxon>
        <taxon>Pentapetalae</taxon>
        <taxon>rosids</taxon>
        <taxon>malvids</taxon>
        <taxon>Brassicales</taxon>
        <taxon>Brassicaceae</taxon>
        <taxon>Camelineae</taxon>
        <taxon>Arabidopsis</taxon>
    </lineage>
</organism>
<evidence type="ECO:0000255" key="1"/>
<evidence type="ECO:0000255" key="2">
    <source>
        <dbReference type="PROSITE-ProRule" id="PRU00129"/>
    </source>
</evidence>
<evidence type="ECO:0000305" key="3"/>
<name>MCC13_ARATH</name>
<feature type="chain" id="PRO_0000429290" description="MATH domain and coiled-coil domain-containing protein At3g44790">
    <location>
        <begin position="1"/>
        <end position="324"/>
    </location>
</feature>
<feature type="domain" description="MATH" evidence="2">
    <location>
        <begin position="3"/>
        <end position="125"/>
    </location>
</feature>
<feature type="coiled-coil region" evidence="1">
    <location>
        <begin position="241"/>
        <end position="309"/>
    </location>
</feature>
<sequence length="324" mass="37263">MGYEKFTWVIKNFSSLQSKYINSDKFVIGGCKWFLKGYQNANYLSLFLMVATSKTLPCGWRRYTRFRLTVVNQLSDELSQQRETETWFDQNVVLSGNRHMISLTKLNAKKGGFLVNNEVKIVVEVDVLQVIGKLDVSEGSQEVTQPLKRIRLNDDGVSVKQSIDVNGFQVLPSQVESVKRIFERHPNMALEFRAKNQHVRTSCMNVLLSLIDTLCQSLQDISIDDLGQAEKALRYLKDSDFKVDWLERKLEEVKEKKMEEQIGKSRMQELEEELKIFKQKCSDIEAQLEKEKQKCSDIEALLEKEKAKSLAAARAPPLTLDDVV</sequence>
<gene>
    <name type="ordered locus">At3g44790</name>
    <name type="ORF">T32N15.4</name>
</gene>
<comment type="sequence caution" evidence="3">
    <conflict type="erroneous gene model prediction">
        <sequence resource="EMBL-CDS" id="AAB70028"/>
    </conflict>
</comment>
<proteinExistence type="predicted"/>